<organism>
    <name type="scientific">Neisseria meningitidis serogroup B (strain ATCC BAA-335 / MC58)</name>
    <dbReference type="NCBI Taxonomy" id="122586"/>
    <lineage>
        <taxon>Bacteria</taxon>
        <taxon>Pseudomonadati</taxon>
        <taxon>Pseudomonadota</taxon>
        <taxon>Betaproteobacteria</taxon>
        <taxon>Neisseriales</taxon>
        <taxon>Neisseriaceae</taxon>
        <taxon>Neisseria</taxon>
    </lineage>
</organism>
<protein>
    <recommendedName>
        <fullName>Glycerate kinase</fullName>
        <ecNumber>2.7.1.31</ecNumber>
    </recommendedName>
</protein>
<gene>
    <name type="primary">glxK</name>
    <name type="ordered locus">NMB1268</name>
</gene>
<feature type="chain" id="PRO_0000071538" description="Glycerate kinase">
    <location>
        <begin position="1"/>
        <end position="371"/>
    </location>
</feature>
<reference key="1">
    <citation type="journal article" date="2000" name="Science">
        <title>Complete genome sequence of Neisseria meningitidis serogroup B strain MC58.</title>
        <authorList>
            <person name="Tettelin H."/>
            <person name="Saunders N.J."/>
            <person name="Heidelberg J.F."/>
            <person name="Jeffries A.C."/>
            <person name="Nelson K.E."/>
            <person name="Eisen J.A."/>
            <person name="Ketchum K.A."/>
            <person name="Hood D.W."/>
            <person name="Peden J.F."/>
            <person name="Dodson R.J."/>
            <person name="Nelson W.C."/>
            <person name="Gwinn M.L."/>
            <person name="DeBoy R.T."/>
            <person name="Peterson J.D."/>
            <person name="Hickey E.K."/>
            <person name="Haft D.H."/>
            <person name="Salzberg S.L."/>
            <person name="White O."/>
            <person name="Fleischmann R.D."/>
            <person name="Dougherty B.A."/>
            <person name="Mason T.M."/>
            <person name="Ciecko A."/>
            <person name="Parksey D.S."/>
            <person name="Blair E."/>
            <person name="Cittone H."/>
            <person name="Clark E.B."/>
            <person name="Cotton M.D."/>
            <person name="Utterback T.R."/>
            <person name="Khouri H.M."/>
            <person name="Qin H."/>
            <person name="Vamathevan J.J."/>
            <person name="Gill J."/>
            <person name="Scarlato V."/>
            <person name="Masignani V."/>
            <person name="Pizza M."/>
            <person name="Grandi G."/>
            <person name="Sun L."/>
            <person name="Smith H.O."/>
            <person name="Fraser C.M."/>
            <person name="Moxon E.R."/>
            <person name="Rappuoli R."/>
            <person name="Venter J.C."/>
        </authorList>
    </citation>
    <scope>NUCLEOTIDE SEQUENCE [LARGE SCALE GENOMIC DNA]</scope>
    <source>
        <strain>ATCC BAA-335 / MC58</strain>
    </source>
</reference>
<comment type="catalytic activity">
    <reaction>
        <text>(R)-glycerate + ATP = (2R)-3-phosphoglycerate + ADP + H(+)</text>
        <dbReference type="Rhea" id="RHEA:23516"/>
        <dbReference type="ChEBI" id="CHEBI:15378"/>
        <dbReference type="ChEBI" id="CHEBI:16659"/>
        <dbReference type="ChEBI" id="CHEBI:30616"/>
        <dbReference type="ChEBI" id="CHEBI:58272"/>
        <dbReference type="ChEBI" id="CHEBI:456216"/>
        <dbReference type="EC" id="2.7.1.31"/>
    </reaction>
</comment>
<comment type="similarity">
    <text evidence="1">Belongs to the glycerate kinase type-1 family.</text>
</comment>
<evidence type="ECO:0000305" key="1"/>
<dbReference type="EC" id="2.7.1.31"/>
<dbReference type="EMBL" id="AE002098">
    <property type="protein sequence ID" value="AAF41645.1"/>
    <property type="molecule type" value="Genomic_DNA"/>
</dbReference>
<dbReference type="PIR" id="F81102">
    <property type="entry name" value="F81102"/>
</dbReference>
<dbReference type="RefSeq" id="NP_274289.1">
    <property type="nucleotide sequence ID" value="NC_003112.2"/>
</dbReference>
<dbReference type="RefSeq" id="WP_002222399.1">
    <property type="nucleotide sequence ID" value="NC_003112.2"/>
</dbReference>
<dbReference type="SMR" id="P57099"/>
<dbReference type="FunCoup" id="P57099">
    <property type="interactions" value="130"/>
</dbReference>
<dbReference type="STRING" id="122586.NMB1268"/>
<dbReference type="PaxDb" id="122586-NMB1268"/>
<dbReference type="KEGG" id="nme:NMB1268"/>
<dbReference type="PATRIC" id="fig|122586.8.peg.1587"/>
<dbReference type="HOGENOM" id="CLU_028255_0_0_4"/>
<dbReference type="InParanoid" id="P57099"/>
<dbReference type="OrthoDB" id="9774290at2"/>
<dbReference type="Proteomes" id="UP000000425">
    <property type="component" value="Chromosome"/>
</dbReference>
<dbReference type="GO" id="GO:0005524">
    <property type="term" value="F:ATP binding"/>
    <property type="evidence" value="ECO:0007669"/>
    <property type="project" value="UniProtKB-KW"/>
</dbReference>
<dbReference type="GO" id="GO:0043798">
    <property type="term" value="F:glycerate 2-kinase activity"/>
    <property type="evidence" value="ECO:0000318"/>
    <property type="project" value="GO_Central"/>
</dbReference>
<dbReference type="GO" id="GO:0008887">
    <property type="term" value="F:glycerate kinase activity"/>
    <property type="evidence" value="ECO:0007669"/>
    <property type="project" value="UniProtKB-EC"/>
</dbReference>
<dbReference type="GO" id="GO:0031388">
    <property type="term" value="P:organic acid phosphorylation"/>
    <property type="evidence" value="ECO:0007669"/>
    <property type="project" value="InterPro"/>
</dbReference>
<dbReference type="Gene3D" id="3.40.50.10350">
    <property type="entry name" value="Glycerate kinase, domain 1"/>
    <property type="match status" value="1"/>
</dbReference>
<dbReference type="Gene3D" id="3.90.1510.10">
    <property type="entry name" value="Glycerate kinase, domain 2"/>
    <property type="match status" value="1"/>
</dbReference>
<dbReference type="InterPro" id="IPR018193">
    <property type="entry name" value="Glyc_kinase_flavodox-like_fold"/>
</dbReference>
<dbReference type="InterPro" id="IPR004381">
    <property type="entry name" value="Glycerate_kinase"/>
</dbReference>
<dbReference type="InterPro" id="IPR018197">
    <property type="entry name" value="Glycerate_kinase_RE-like"/>
</dbReference>
<dbReference type="InterPro" id="IPR036129">
    <property type="entry name" value="Glycerate_kinase_sf"/>
</dbReference>
<dbReference type="NCBIfam" id="TIGR00045">
    <property type="entry name" value="glycerate kinase"/>
    <property type="match status" value="1"/>
</dbReference>
<dbReference type="PANTHER" id="PTHR21599">
    <property type="entry name" value="GLYCERATE KINASE"/>
    <property type="match status" value="1"/>
</dbReference>
<dbReference type="PANTHER" id="PTHR21599:SF0">
    <property type="entry name" value="GLYCERATE KINASE"/>
    <property type="match status" value="1"/>
</dbReference>
<dbReference type="Pfam" id="PF02595">
    <property type="entry name" value="Gly_kinase"/>
    <property type="match status" value="1"/>
</dbReference>
<dbReference type="PIRSF" id="PIRSF006078">
    <property type="entry name" value="GlxK"/>
    <property type="match status" value="1"/>
</dbReference>
<dbReference type="SUPFAM" id="SSF110738">
    <property type="entry name" value="Glycerate kinase I"/>
    <property type="match status" value="1"/>
</dbReference>
<accession>P57099</accession>
<proteinExistence type="inferred from homology"/>
<keyword id="KW-0067">ATP-binding</keyword>
<keyword id="KW-0418">Kinase</keyword>
<keyword id="KW-0547">Nucleotide-binding</keyword>
<keyword id="KW-1185">Reference proteome</keyword>
<keyword id="KW-0808">Transferase</keyword>
<sequence>MKIVIAPDSFKESLTAQQVAEAIKRGFQQSIADVECLLCPVGDGGEGTVDAIRHSLDLEEKCLQVTGPFGQKEVMRYFQKEQLALFEVADLVGLGKIPLEKRNPLQIQTRGIGELIRHLISQEIKEIYIGVGGTASNDGGIGIAAGLGYQFYDEDGNALPVCGQSLLNLASVSTENRYEIPEDVHIRILADVVSPLCGHQGATYTFGKQKGLDSTMFEAVDQAIQDFYEKVSPATLKLKGAGAGGGIAGGLCAFAQASIVSGIDTCLDLIDFDKKVSDVDLVIVGEGRLDRQSLAGKAPIGVAKRTPVGVPVVAICGSLVEDLPSLPFENIQAAFSILEKSEPLEDSLKNASLYLEHTASNIGHLLNMPKI</sequence>
<name>GLXK_NEIMB</name>